<protein>
    <recommendedName>
        <fullName evidence="1">Hypoxanthine/guanine phosphoribosyltransferase</fullName>
        <shortName evidence="1">HGPRTase</shortName>
        <ecNumber evidence="1">2.4.2.8</ecNumber>
    </recommendedName>
</protein>
<keyword id="KW-0963">Cytoplasm</keyword>
<keyword id="KW-0328">Glycosyltransferase</keyword>
<keyword id="KW-0660">Purine salvage</keyword>
<keyword id="KW-0808">Transferase</keyword>
<feature type="chain" id="PRO_0000415481" description="Hypoxanthine/guanine phosphoribosyltransferase">
    <location>
        <begin position="1"/>
        <end position="190"/>
    </location>
</feature>
<reference key="1">
    <citation type="journal article" date="2006" name="J. Bacteriol.">
        <title>The Methanosarcina barkeri genome: comparative analysis with Methanosarcina acetivorans and Methanosarcina mazei reveals extensive rearrangement within methanosarcinal genomes.</title>
        <authorList>
            <person name="Maeder D.L."/>
            <person name="Anderson I."/>
            <person name="Brettin T.S."/>
            <person name="Bruce D.C."/>
            <person name="Gilna P."/>
            <person name="Han C.S."/>
            <person name="Lapidus A."/>
            <person name="Metcalf W.W."/>
            <person name="Saunders E."/>
            <person name="Tapia R."/>
            <person name="Sowers K.R."/>
        </authorList>
    </citation>
    <scope>NUCLEOTIDE SEQUENCE [LARGE SCALE GENOMIC DNA]</scope>
    <source>
        <strain>Fusaro / DSM 804</strain>
    </source>
</reference>
<organism>
    <name type="scientific">Methanosarcina barkeri (strain Fusaro / DSM 804)</name>
    <dbReference type="NCBI Taxonomy" id="269797"/>
    <lineage>
        <taxon>Archaea</taxon>
        <taxon>Methanobacteriati</taxon>
        <taxon>Methanobacteriota</taxon>
        <taxon>Stenosarchaea group</taxon>
        <taxon>Methanomicrobia</taxon>
        <taxon>Methanosarcinales</taxon>
        <taxon>Methanosarcinaceae</taxon>
        <taxon>Methanosarcina</taxon>
    </lineage>
</organism>
<name>HPRT_METBF</name>
<sequence>MLEKLKTSLINSPVIKRGEYNYFIHPISDGVPSIDPHMVEEIAEYILQITDIKKVDTILTIEAMGIPVANALSLKTGIPLTIVRKRPYFLEGEVELSQRTGYSKGALYINGLKKGDRVIIVDDVISTGGTLIALVKALKTIGVEIQDVISVIGRGTGYLQLKELGVEPKILVTIDVSEKGVEIKNVFGNE</sequence>
<comment type="function">
    <text evidence="1">Catalyzes a salvage reaction resulting in the formation of IMP that is energically less costly than de novo synthesis.</text>
</comment>
<comment type="catalytic activity">
    <reaction evidence="1">
        <text>IMP + diphosphate = hypoxanthine + 5-phospho-alpha-D-ribose 1-diphosphate</text>
        <dbReference type="Rhea" id="RHEA:17973"/>
        <dbReference type="ChEBI" id="CHEBI:17368"/>
        <dbReference type="ChEBI" id="CHEBI:33019"/>
        <dbReference type="ChEBI" id="CHEBI:58017"/>
        <dbReference type="ChEBI" id="CHEBI:58053"/>
        <dbReference type="EC" id="2.4.2.8"/>
    </reaction>
</comment>
<comment type="catalytic activity">
    <reaction evidence="1">
        <text>GMP + diphosphate = guanine + 5-phospho-alpha-D-ribose 1-diphosphate</text>
        <dbReference type="Rhea" id="RHEA:25424"/>
        <dbReference type="ChEBI" id="CHEBI:16235"/>
        <dbReference type="ChEBI" id="CHEBI:33019"/>
        <dbReference type="ChEBI" id="CHEBI:58017"/>
        <dbReference type="ChEBI" id="CHEBI:58115"/>
        <dbReference type="EC" id="2.4.2.8"/>
    </reaction>
</comment>
<comment type="pathway">
    <text evidence="1">Purine metabolism; IMP biosynthesis via salvage pathway; IMP from hypoxanthine: step 1/1.</text>
</comment>
<comment type="subunit">
    <text evidence="1">Homodimer.</text>
</comment>
<comment type="subcellular location">
    <subcellularLocation>
        <location evidence="1">Cytoplasm</location>
    </subcellularLocation>
</comment>
<comment type="similarity">
    <text evidence="1">Belongs to the purine/pyrimidine phosphoribosyltransferase family. Archaeal HPRT subfamily.</text>
</comment>
<proteinExistence type="inferred from homology"/>
<evidence type="ECO:0000255" key="1">
    <source>
        <dbReference type="HAMAP-Rule" id="MF_01467"/>
    </source>
</evidence>
<gene>
    <name evidence="1" type="primary">hpt</name>
    <name type="ordered locus">Mbar_A1633</name>
</gene>
<accession>Q46C14</accession>
<dbReference type="EC" id="2.4.2.8" evidence="1"/>
<dbReference type="EMBL" id="CP000099">
    <property type="protein sequence ID" value="AAZ70578.1"/>
    <property type="molecule type" value="Genomic_DNA"/>
</dbReference>
<dbReference type="SMR" id="Q46C14"/>
<dbReference type="STRING" id="269797.Mbar_A1633"/>
<dbReference type="PaxDb" id="269797-Mbar_A1633"/>
<dbReference type="KEGG" id="mba:Mbar_A1633"/>
<dbReference type="eggNOG" id="arCOG00030">
    <property type="taxonomic scope" value="Archaea"/>
</dbReference>
<dbReference type="HOGENOM" id="CLU_126376_0_0_2"/>
<dbReference type="OrthoDB" id="8323at2157"/>
<dbReference type="UniPathway" id="UPA00591">
    <property type="reaction ID" value="UER00648"/>
</dbReference>
<dbReference type="GO" id="GO:0005737">
    <property type="term" value="C:cytoplasm"/>
    <property type="evidence" value="ECO:0007669"/>
    <property type="project" value="UniProtKB-SubCell"/>
</dbReference>
<dbReference type="GO" id="GO:0052657">
    <property type="term" value="F:guanine phosphoribosyltransferase activity"/>
    <property type="evidence" value="ECO:0007669"/>
    <property type="project" value="RHEA"/>
</dbReference>
<dbReference type="GO" id="GO:0004422">
    <property type="term" value="F:hypoxanthine phosphoribosyltransferase activity"/>
    <property type="evidence" value="ECO:0007669"/>
    <property type="project" value="UniProtKB-UniRule"/>
</dbReference>
<dbReference type="GO" id="GO:0032264">
    <property type="term" value="P:IMP salvage"/>
    <property type="evidence" value="ECO:0007669"/>
    <property type="project" value="UniProtKB-UniRule"/>
</dbReference>
<dbReference type="GO" id="GO:0006166">
    <property type="term" value="P:purine ribonucleoside salvage"/>
    <property type="evidence" value="ECO:0007669"/>
    <property type="project" value="UniProtKB-KW"/>
</dbReference>
<dbReference type="CDD" id="cd06223">
    <property type="entry name" value="PRTases_typeI"/>
    <property type="match status" value="1"/>
</dbReference>
<dbReference type="Gene3D" id="3.40.50.2020">
    <property type="match status" value="1"/>
</dbReference>
<dbReference type="HAMAP" id="MF_01467">
    <property type="entry name" value="Hypx_phosphoribosyltr"/>
    <property type="match status" value="1"/>
</dbReference>
<dbReference type="InterPro" id="IPR026597">
    <property type="entry name" value="HGPRTase-like"/>
</dbReference>
<dbReference type="InterPro" id="IPR000836">
    <property type="entry name" value="PRibTrfase_dom"/>
</dbReference>
<dbReference type="InterPro" id="IPR029057">
    <property type="entry name" value="PRTase-like"/>
</dbReference>
<dbReference type="InterPro" id="IPR050118">
    <property type="entry name" value="Pur/Pyrimidine_PRTase"/>
</dbReference>
<dbReference type="NCBIfam" id="NF040646">
    <property type="entry name" value="HPT_Archaea"/>
    <property type="match status" value="1"/>
</dbReference>
<dbReference type="NCBIfam" id="NF002635">
    <property type="entry name" value="PRK02304.1-4"/>
    <property type="match status" value="1"/>
</dbReference>
<dbReference type="PANTHER" id="PTHR43864">
    <property type="entry name" value="HYPOXANTHINE/GUANINE PHOSPHORIBOSYLTRANSFERASE"/>
    <property type="match status" value="1"/>
</dbReference>
<dbReference type="PANTHER" id="PTHR43864:SF1">
    <property type="entry name" value="XANTHINE PHOSPHORIBOSYLTRANSFERASE"/>
    <property type="match status" value="1"/>
</dbReference>
<dbReference type="Pfam" id="PF00156">
    <property type="entry name" value="Pribosyltran"/>
    <property type="match status" value="1"/>
</dbReference>
<dbReference type="SUPFAM" id="SSF53271">
    <property type="entry name" value="PRTase-like"/>
    <property type="match status" value="1"/>
</dbReference>
<dbReference type="PROSITE" id="PS00103">
    <property type="entry name" value="PUR_PYR_PR_TRANSFER"/>
    <property type="match status" value="1"/>
</dbReference>